<dbReference type="EC" id="2.5.1.6" evidence="1"/>
<dbReference type="EMBL" id="CP001131">
    <property type="protein sequence ID" value="ACG71404.1"/>
    <property type="molecule type" value="Genomic_DNA"/>
</dbReference>
<dbReference type="RefSeq" id="WP_012524240.1">
    <property type="nucleotide sequence ID" value="NC_011145.1"/>
</dbReference>
<dbReference type="SMR" id="B4ULF7"/>
<dbReference type="KEGG" id="ank:AnaeK_0161"/>
<dbReference type="HOGENOM" id="CLU_041802_1_1_7"/>
<dbReference type="OrthoDB" id="9801686at2"/>
<dbReference type="UniPathway" id="UPA00315">
    <property type="reaction ID" value="UER00080"/>
</dbReference>
<dbReference type="Proteomes" id="UP000001871">
    <property type="component" value="Chromosome"/>
</dbReference>
<dbReference type="GO" id="GO:0005737">
    <property type="term" value="C:cytoplasm"/>
    <property type="evidence" value="ECO:0007669"/>
    <property type="project" value="UniProtKB-SubCell"/>
</dbReference>
<dbReference type="GO" id="GO:0005524">
    <property type="term" value="F:ATP binding"/>
    <property type="evidence" value="ECO:0007669"/>
    <property type="project" value="UniProtKB-UniRule"/>
</dbReference>
<dbReference type="GO" id="GO:0000287">
    <property type="term" value="F:magnesium ion binding"/>
    <property type="evidence" value="ECO:0007669"/>
    <property type="project" value="UniProtKB-UniRule"/>
</dbReference>
<dbReference type="GO" id="GO:0004478">
    <property type="term" value="F:methionine adenosyltransferase activity"/>
    <property type="evidence" value="ECO:0007669"/>
    <property type="project" value="UniProtKB-UniRule"/>
</dbReference>
<dbReference type="GO" id="GO:0006730">
    <property type="term" value="P:one-carbon metabolic process"/>
    <property type="evidence" value="ECO:0007669"/>
    <property type="project" value="UniProtKB-KW"/>
</dbReference>
<dbReference type="GO" id="GO:0006556">
    <property type="term" value="P:S-adenosylmethionine biosynthetic process"/>
    <property type="evidence" value="ECO:0007669"/>
    <property type="project" value="UniProtKB-UniRule"/>
</dbReference>
<dbReference type="CDD" id="cd18079">
    <property type="entry name" value="S-AdoMet_synt"/>
    <property type="match status" value="1"/>
</dbReference>
<dbReference type="FunFam" id="3.30.300.10:FF:000003">
    <property type="entry name" value="S-adenosylmethionine synthase"/>
    <property type="match status" value="1"/>
</dbReference>
<dbReference type="Gene3D" id="3.30.300.10">
    <property type="match status" value="3"/>
</dbReference>
<dbReference type="HAMAP" id="MF_00086">
    <property type="entry name" value="S_AdoMet_synth1"/>
    <property type="match status" value="1"/>
</dbReference>
<dbReference type="InterPro" id="IPR022631">
    <property type="entry name" value="ADOMET_SYNTHASE_CS"/>
</dbReference>
<dbReference type="InterPro" id="IPR022630">
    <property type="entry name" value="S-AdoMet_synt_C"/>
</dbReference>
<dbReference type="InterPro" id="IPR022629">
    <property type="entry name" value="S-AdoMet_synt_central"/>
</dbReference>
<dbReference type="InterPro" id="IPR022628">
    <property type="entry name" value="S-AdoMet_synt_N"/>
</dbReference>
<dbReference type="InterPro" id="IPR002133">
    <property type="entry name" value="S-AdoMet_synthetase"/>
</dbReference>
<dbReference type="InterPro" id="IPR022636">
    <property type="entry name" value="S-AdoMet_synthetase_sfam"/>
</dbReference>
<dbReference type="NCBIfam" id="TIGR01034">
    <property type="entry name" value="metK"/>
    <property type="match status" value="1"/>
</dbReference>
<dbReference type="PANTHER" id="PTHR11964">
    <property type="entry name" value="S-ADENOSYLMETHIONINE SYNTHETASE"/>
    <property type="match status" value="1"/>
</dbReference>
<dbReference type="Pfam" id="PF02773">
    <property type="entry name" value="S-AdoMet_synt_C"/>
    <property type="match status" value="1"/>
</dbReference>
<dbReference type="Pfam" id="PF02772">
    <property type="entry name" value="S-AdoMet_synt_M"/>
    <property type="match status" value="1"/>
</dbReference>
<dbReference type="Pfam" id="PF00438">
    <property type="entry name" value="S-AdoMet_synt_N"/>
    <property type="match status" value="1"/>
</dbReference>
<dbReference type="PIRSF" id="PIRSF000497">
    <property type="entry name" value="MAT"/>
    <property type="match status" value="1"/>
</dbReference>
<dbReference type="SUPFAM" id="SSF55973">
    <property type="entry name" value="S-adenosylmethionine synthetase"/>
    <property type="match status" value="3"/>
</dbReference>
<dbReference type="PROSITE" id="PS00376">
    <property type="entry name" value="ADOMET_SYNTHASE_1"/>
    <property type="match status" value="1"/>
</dbReference>
<dbReference type="PROSITE" id="PS00377">
    <property type="entry name" value="ADOMET_SYNTHASE_2"/>
    <property type="match status" value="1"/>
</dbReference>
<organism>
    <name type="scientific">Anaeromyxobacter sp. (strain K)</name>
    <dbReference type="NCBI Taxonomy" id="447217"/>
    <lineage>
        <taxon>Bacteria</taxon>
        <taxon>Pseudomonadati</taxon>
        <taxon>Myxococcota</taxon>
        <taxon>Myxococcia</taxon>
        <taxon>Myxococcales</taxon>
        <taxon>Cystobacterineae</taxon>
        <taxon>Anaeromyxobacteraceae</taxon>
        <taxon>Anaeromyxobacter</taxon>
    </lineage>
</organism>
<proteinExistence type="inferred from homology"/>
<accession>B4ULF7</accession>
<name>METK_ANASK</name>
<reference key="1">
    <citation type="submission" date="2008-08" db="EMBL/GenBank/DDBJ databases">
        <title>Complete sequence of Anaeromyxobacter sp. K.</title>
        <authorList>
            <consortium name="US DOE Joint Genome Institute"/>
            <person name="Lucas S."/>
            <person name="Copeland A."/>
            <person name="Lapidus A."/>
            <person name="Glavina del Rio T."/>
            <person name="Dalin E."/>
            <person name="Tice H."/>
            <person name="Bruce D."/>
            <person name="Goodwin L."/>
            <person name="Pitluck S."/>
            <person name="Saunders E."/>
            <person name="Brettin T."/>
            <person name="Detter J.C."/>
            <person name="Han C."/>
            <person name="Larimer F."/>
            <person name="Land M."/>
            <person name="Hauser L."/>
            <person name="Kyrpides N."/>
            <person name="Ovchinnikiva G."/>
            <person name="Beliaev A."/>
        </authorList>
    </citation>
    <scope>NUCLEOTIDE SEQUENCE [LARGE SCALE GENOMIC DNA]</scope>
    <source>
        <strain>K</strain>
    </source>
</reference>
<comment type="function">
    <text evidence="1">Catalyzes the formation of S-adenosylmethionine (AdoMet) from methionine and ATP. The overall synthetic reaction is composed of two sequential steps, AdoMet formation and the subsequent tripolyphosphate hydrolysis which occurs prior to release of AdoMet from the enzyme.</text>
</comment>
<comment type="catalytic activity">
    <reaction evidence="1">
        <text>L-methionine + ATP + H2O = S-adenosyl-L-methionine + phosphate + diphosphate</text>
        <dbReference type="Rhea" id="RHEA:21080"/>
        <dbReference type="ChEBI" id="CHEBI:15377"/>
        <dbReference type="ChEBI" id="CHEBI:30616"/>
        <dbReference type="ChEBI" id="CHEBI:33019"/>
        <dbReference type="ChEBI" id="CHEBI:43474"/>
        <dbReference type="ChEBI" id="CHEBI:57844"/>
        <dbReference type="ChEBI" id="CHEBI:59789"/>
        <dbReference type="EC" id="2.5.1.6"/>
    </reaction>
</comment>
<comment type="cofactor">
    <cofactor evidence="1">
        <name>Mg(2+)</name>
        <dbReference type="ChEBI" id="CHEBI:18420"/>
    </cofactor>
    <text evidence="1">Binds 2 divalent ions per subunit.</text>
</comment>
<comment type="cofactor">
    <cofactor evidence="1">
        <name>K(+)</name>
        <dbReference type="ChEBI" id="CHEBI:29103"/>
    </cofactor>
    <text evidence="1">Binds 1 potassium ion per subunit.</text>
</comment>
<comment type="pathway">
    <text evidence="1">Amino-acid biosynthesis; S-adenosyl-L-methionine biosynthesis; S-adenosyl-L-methionine from L-methionine: step 1/1.</text>
</comment>
<comment type="subunit">
    <text evidence="1">Homotetramer; dimer of dimers.</text>
</comment>
<comment type="subcellular location">
    <subcellularLocation>
        <location evidence="1">Cytoplasm</location>
    </subcellularLocation>
</comment>
<comment type="similarity">
    <text evidence="1">Belongs to the AdoMet synthase family.</text>
</comment>
<feature type="chain" id="PRO_1000093023" description="S-adenosylmethionine synthase">
    <location>
        <begin position="1"/>
        <end position="388"/>
    </location>
</feature>
<feature type="region of interest" description="Flexible loop" evidence="1">
    <location>
        <begin position="101"/>
        <end position="111"/>
    </location>
</feature>
<feature type="binding site" description="in other chain" evidence="1">
    <location>
        <position position="17"/>
    </location>
    <ligand>
        <name>ATP</name>
        <dbReference type="ChEBI" id="CHEBI:30616"/>
        <note>ligand shared between two neighboring subunits</note>
    </ligand>
</feature>
<feature type="binding site" evidence="1">
    <location>
        <position position="19"/>
    </location>
    <ligand>
        <name>Mg(2+)</name>
        <dbReference type="ChEBI" id="CHEBI:18420"/>
    </ligand>
</feature>
<feature type="binding site" evidence="1">
    <location>
        <position position="45"/>
    </location>
    <ligand>
        <name>K(+)</name>
        <dbReference type="ChEBI" id="CHEBI:29103"/>
    </ligand>
</feature>
<feature type="binding site" description="in other chain" evidence="1">
    <location>
        <position position="58"/>
    </location>
    <ligand>
        <name>L-methionine</name>
        <dbReference type="ChEBI" id="CHEBI:57844"/>
        <note>ligand shared between two neighboring subunits</note>
    </ligand>
</feature>
<feature type="binding site" description="in other chain" evidence="1">
    <location>
        <position position="101"/>
    </location>
    <ligand>
        <name>L-methionine</name>
        <dbReference type="ChEBI" id="CHEBI:57844"/>
        <note>ligand shared between two neighboring subunits</note>
    </ligand>
</feature>
<feature type="binding site" description="in other chain" evidence="1">
    <location>
        <begin position="160"/>
        <end position="162"/>
    </location>
    <ligand>
        <name>ATP</name>
        <dbReference type="ChEBI" id="CHEBI:30616"/>
        <note>ligand shared between two neighboring subunits</note>
    </ligand>
</feature>
<feature type="binding site" description="in other chain" evidence="1">
    <location>
        <begin position="226"/>
        <end position="227"/>
    </location>
    <ligand>
        <name>ATP</name>
        <dbReference type="ChEBI" id="CHEBI:30616"/>
        <note>ligand shared between two neighboring subunits</note>
    </ligand>
</feature>
<feature type="binding site" evidence="1">
    <location>
        <position position="235"/>
    </location>
    <ligand>
        <name>ATP</name>
        <dbReference type="ChEBI" id="CHEBI:30616"/>
        <note>ligand shared between two neighboring subunits</note>
    </ligand>
</feature>
<feature type="binding site" evidence="1">
    <location>
        <position position="235"/>
    </location>
    <ligand>
        <name>L-methionine</name>
        <dbReference type="ChEBI" id="CHEBI:57844"/>
        <note>ligand shared between two neighboring subunits</note>
    </ligand>
</feature>
<feature type="binding site" description="in other chain" evidence="1">
    <location>
        <begin position="241"/>
        <end position="242"/>
    </location>
    <ligand>
        <name>ATP</name>
        <dbReference type="ChEBI" id="CHEBI:30616"/>
        <note>ligand shared between two neighboring subunits</note>
    </ligand>
</feature>
<feature type="binding site" evidence="1">
    <location>
        <position position="258"/>
    </location>
    <ligand>
        <name>ATP</name>
        <dbReference type="ChEBI" id="CHEBI:30616"/>
        <note>ligand shared between two neighboring subunits</note>
    </ligand>
</feature>
<feature type="binding site" evidence="1">
    <location>
        <position position="262"/>
    </location>
    <ligand>
        <name>ATP</name>
        <dbReference type="ChEBI" id="CHEBI:30616"/>
        <note>ligand shared between two neighboring subunits</note>
    </ligand>
</feature>
<feature type="binding site" description="in other chain" evidence="1">
    <location>
        <position position="266"/>
    </location>
    <ligand>
        <name>L-methionine</name>
        <dbReference type="ChEBI" id="CHEBI:57844"/>
        <note>ligand shared between two neighboring subunits</note>
    </ligand>
</feature>
<gene>
    <name evidence="1" type="primary">metK</name>
    <name type="ordered locus">AnaeK_0161</name>
</gene>
<sequence length="388" mass="41841">MPLQDFLFTSESVTEGHPDKMADQISDAVLDAVLRQDPKGRVACETLLKTGYVMIAGEITTKARIDYPKLARETVRRIGYTSGDMGFDANTCAVLVAVDQQSPDIGQGVDTGGAGDQGMMFGYACDETPELMPAPIQYAHAVTKQLAKARRAGLDLLRPDGKSQVSVEYRDGRPVRIDTVVVSTQHAESVSNKRLHEAVREQVIAKALPKRLLDRKTRILINPTGRFVIGGPMGDTGVTGRKIIVDTYGGMGRHGGGAFSGKDPSKVDRSAAYMGRYIAKNVVAAGLASRCEVQVAYAIGVAEPVSVMVDTFGTAKVPEGKIARAVREVFGLTPRAIIEGLDLLRPVYEKTAAYGHFGRTEKTFTWERTDKKEALADAAGLSKIRAVI</sequence>
<protein>
    <recommendedName>
        <fullName evidence="1">S-adenosylmethionine synthase</fullName>
        <shortName evidence="1">AdoMet synthase</shortName>
        <ecNumber evidence="1">2.5.1.6</ecNumber>
    </recommendedName>
    <alternativeName>
        <fullName evidence="1">MAT</fullName>
    </alternativeName>
    <alternativeName>
        <fullName evidence="1">Methionine adenosyltransferase</fullName>
    </alternativeName>
</protein>
<keyword id="KW-0067">ATP-binding</keyword>
<keyword id="KW-0963">Cytoplasm</keyword>
<keyword id="KW-0460">Magnesium</keyword>
<keyword id="KW-0479">Metal-binding</keyword>
<keyword id="KW-0547">Nucleotide-binding</keyword>
<keyword id="KW-0554">One-carbon metabolism</keyword>
<keyword id="KW-0630">Potassium</keyword>
<keyword id="KW-0808">Transferase</keyword>
<evidence type="ECO:0000255" key="1">
    <source>
        <dbReference type="HAMAP-Rule" id="MF_00086"/>
    </source>
</evidence>